<protein>
    <recommendedName>
        <fullName>Centrin-3</fullName>
    </recommendedName>
</protein>
<accession>O15182</accession>
<accession>Q53YD2</accession>
<accession>Q9BS23</accession>
<comment type="function">
    <text>Plays a fundamental role in microtubule-organizing center structure and function.</text>
</comment>
<comment type="function">
    <text evidence="4 11">As a component of the TREX-2 complex, involved in the export of mRNAs to the cytoplasm through the nuclear pores.</text>
</comment>
<comment type="subunit">
    <text evidence="1 4 5 7">Monomer (By similarity). Component of the nuclear pore complex (NPC)-associated TREX-2 complex (transcription and export complex 2), composed of at least GANP, 2 copies of ENY2, PCID2, SEM1/DSS1, and either centrin CETN2 or centrin CETN3. The TREX-2 complex also associates with ALYREF/ALY and with the nucleoporin NUP153 (PubMed:22307388, PubMed:23591820). Interacts with USP49 (PubMed:36702832).</text>
</comment>
<comment type="interaction">
    <interactant intactId="EBI-712959">
        <id>O15182</id>
    </interactant>
    <interactant intactId="EBI-712648">
        <id>O95994</id>
        <label>AGR2</label>
    </interactant>
    <organismsDiffer>false</organismsDiffer>
    <experiments>3</experiments>
</comment>
<comment type="interaction">
    <interactant intactId="EBI-712959">
        <id>O15182</id>
    </interactant>
    <interactant intactId="EBI-712973">
        <id>P17540</id>
        <label>CKMT2</label>
    </interactant>
    <organismsDiffer>false</organismsDiffer>
    <experiments>3</experiments>
</comment>
<comment type="interaction">
    <interactant intactId="EBI-712959">
        <id>O15182</id>
    </interactant>
    <interactant intactId="EBI-21591415">
        <id>P13473-2</id>
        <label>LAMP2</label>
    </interactant>
    <organismsDiffer>false</organismsDiffer>
    <experiments>3</experiments>
</comment>
<comment type="interaction">
    <interactant intactId="EBI-712959">
        <id>O15182</id>
    </interactant>
    <interactant intactId="EBI-2865580">
        <id>O43679</id>
        <label>LDB2</label>
    </interactant>
    <organismsDiffer>false</organismsDiffer>
    <experiments>3</experiments>
</comment>
<comment type="interaction">
    <interactant intactId="EBI-712959">
        <id>O15182</id>
    </interactant>
    <interactant intactId="EBI-2561090">
        <id>Q8NA72</id>
        <label>POC5</label>
    </interactant>
    <organismsDiffer>false</organismsDiffer>
    <experiments>11</experiments>
</comment>
<comment type="interaction">
    <interactant intactId="EBI-712959">
        <id>O15182</id>
    </interactant>
    <interactant intactId="EBI-11751537">
        <id>Q8NA72-3</id>
        <label>POC5</label>
    </interactant>
    <organismsDiffer>false</organismsDiffer>
    <experiments>8</experiments>
</comment>
<comment type="interaction">
    <interactant intactId="EBI-712959">
        <id>O15182</id>
    </interactant>
    <interactant intactId="EBI-948278">
        <id>Q15293</id>
        <label>RCN1</label>
    </interactant>
    <organismsDiffer>false</organismsDiffer>
    <experiments>5</experiments>
</comment>
<comment type="interaction">
    <interactant intactId="EBI-712959">
        <id>O15182</id>
    </interactant>
    <interactant intactId="EBI-1042854">
        <id>O00141</id>
        <label>SGK1</label>
    </interactant>
    <organismsDiffer>false</organismsDiffer>
    <experiments>3</experiments>
</comment>
<comment type="interaction">
    <interactant intactId="EBI-712959">
        <id>O15182</id>
    </interactant>
    <interactant intactId="EBI-10182463">
        <id>Q2NKQ1-4</id>
        <label>SGSM1</label>
    </interactant>
    <organismsDiffer>false</organismsDiffer>
    <experiments>6</experiments>
</comment>
<comment type="interaction">
    <interactant intactId="EBI-712959">
        <id>O15182</id>
    </interactant>
    <interactant intactId="EBI-2623095">
        <id>Q9Y371</id>
        <label>SH3GLB1</label>
    </interactant>
    <organismsDiffer>false</organismsDiffer>
    <experiments>3</experiments>
</comment>
<comment type="interaction">
    <interactant intactId="EBI-712959">
        <id>O15182</id>
    </interactant>
    <interactant intactId="EBI-954089">
        <id>O15273</id>
        <label>TCAP</label>
    </interactant>
    <organismsDiffer>false</organismsDiffer>
    <experiments>2</experiments>
</comment>
<comment type="interaction">
    <interactant intactId="EBI-712959">
        <id>O15182</id>
    </interactant>
    <interactant intactId="EBI-746692">
        <id>P19237</id>
        <label>TNNI1</label>
    </interactant>
    <organismsDiffer>false</organismsDiffer>
    <experiments>3</experiments>
</comment>
<comment type="subcellular location">
    <subcellularLocation>
        <location evidence="3 8">Cytoplasm</location>
        <location evidence="3 8">Cytoskeleton</location>
        <location evidence="3 8">Microtubule organizing center</location>
        <location evidence="3 8">Centrosome</location>
    </subcellularLocation>
    <subcellularLocation>
        <location evidence="9">Nucleus</location>
        <location evidence="9">Nucleolus</location>
    </subcellularLocation>
    <subcellularLocation>
        <location evidence="5">Nucleus envelope</location>
    </subcellularLocation>
    <subcellularLocation>
        <location evidence="5">Nucleus</location>
        <location evidence="5">Nuclear pore complex</location>
    </subcellularLocation>
    <subcellularLocation>
        <location evidence="5 6">Cytoplasm</location>
        <location evidence="5 6">Cytoskeleton</location>
        <location evidence="5 6">Microtubule organizing center</location>
        <location evidence="5 6">Centrosome</location>
        <location evidence="5 6">Centriole</location>
    </subcellularLocation>
    <text evidence="5 6 8">Centrosome of interphase and mitotic cells (PubMed:9256449). Localizes to centriole distal lumen (PubMed:26337392). Localization at the nuclear pore complex requires NUP153 and TPR (PubMed:23591820).</text>
</comment>
<comment type="similarity">
    <text evidence="10">Belongs to the centrin family.</text>
</comment>
<feature type="chain" id="PRO_0000073563" description="Centrin-3">
    <location>
        <begin position="1"/>
        <end position="167"/>
    </location>
</feature>
<feature type="domain" description="EF-hand 1" evidence="2">
    <location>
        <begin position="25"/>
        <end position="60"/>
    </location>
</feature>
<feature type="domain" description="EF-hand 2" evidence="2">
    <location>
        <begin position="61"/>
        <end position="96"/>
    </location>
</feature>
<feature type="domain" description="EF-hand 3" evidence="2">
    <location>
        <begin position="98"/>
        <end position="133"/>
    </location>
</feature>
<feature type="domain" description="EF-hand 4" evidence="2">
    <location>
        <begin position="134"/>
        <end position="167"/>
    </location>
</feature>
<feature type="binding site" evidence="2">
    <location>
        <position position="147"/>
    </location>
    <ligand>
        <name>Ca(2+)</name>
        <dbReference type="ChEBI" id="CHEBI:29108"/>
    </ligand>
</feature>
<feature type="binding site" evidence="2">
    <location>
        <position position="149"/>
    </location>
    <ligand>
        <name>Ca(2+)</name>
        <dbReference type="ChEBI" id="CHEBI:29108"/>
    </ligand>
</feature>
<feature type="binding site" evidence="2">
    <location>
        <position position="151"/>
    </location>
    <ligand>
        <name>Ca(2+)</name>
        <dbReference type="ChEBI" id="CHEBI:29108"/>
    </ligand>
</feature>
<feature type="binding site" evidence="2">
    <location>
        <position position="153"/>
    </location>
    <ligand>
        <name>Ca(2+)</name>
        <dbReference type="ChEBI" id="CHEBI:29108"/>
    </ligand>
</feature>
<feature type="binding site" evidence="2">
    <location>
        <position position="158"/>
    </location>
    <ligand>
        <name>Ca(2+)</name>
        <dbReference type="ChEBI" id="CHEBI:29108"/>
    </ligand>
</feature>
<feature type="modified residue" description="Phosphoserine" evidence="12">
    <location>
        <position position="135"/>
    </location>
</feature>
<feature type="sequence variant" id="VAR_030846" description="In dbSNP:rs4873." evidence="8">
    <original>V</original>
    <variation>L</variation>
    <location>
        <position position="10"/>
    </location>
</feature>
<organism>
    <name type="scientific">Homo sapiens</name>
    <name type="common">Human</name>
    <dbReference type="NCBI Taxonomy" id="9606"/>
    <lineage>
        <taxon>Eukaryota</taxon>
        <taxon>Metazoa</taxon>
        <taxon>Chordata</taxon>
        <taxon>Craniata</taxon>
        <taxon>Vertebrata</taxon>
        <taxon>Euteleostomi</taxon>
        <taxon>Mammalia</taxon>
        <taxon>Eutheria</taxon>
        <taxon>Euarchontoglires</taxon>
        <taxon>Primates</taxon>
        <taxon>Haplorrhini</taxon>
        <taxon>Catarrhini</taxon>
        <taxon>Hominidae</taxon>
        <taxon>Homo</taxon>
    </lineage>
</organism>
<sequence length="167" mass="19550">MSLALRSELVVDKTKRKKRRELSEEQKQEIKDAFELFDTDKDEAIDYHELKVAMRALGFDVKKADVLKILKDYDREATGKITFEDFNEVVTDWILERDPHEEILKAFKLFDDDDSGKISLRNLRRVARELGENMSDEELRAMIEEFDKDGDGEINQEEFIAIMTGDI</sequence>
<reference key="1">
    <citation type="journal article" date="1997" name="Proc. Natl. Acad. Sci. U.S.A.">
        <title>Identification of a new mammalian centrin gene, more closely related to Saccharomyces cerevisiae CDC31 gene.</title>
        <authorList>
            <person name="Middendorp S."/>
            <person name="Paoletti A."/>
            <person name="Schiebel E."/>
            <person name="Bornens M."/>
        </authorList>
    </citation>
    <scope>NUCLEOTIDE SEQUENCE [MRNA]</scope>
    <scope>SUBCELLULAR LOCATION</scope>
    <scope>VARIANT LEU-10</scope>
</reference>
<reference key="2">
    <citation type="submission" date="2003-05" db="EMBL/GenBank/DDBJ databases">
        <title>Cloning of human full-length CDSs in BD Creator(TM) system donor vector.</title>
        <authorList>
            <person name="Kalnine N."/>
            <person name="Chen X."/>
            <person name="Rolfs A."/>
            <person name="Halleck A."/>
            <person name="Hines L."/>
            <person name="Eisenstein S."/>
            <person name="Koundinya M."/>
            <person name="Raphael J."/>
            <person name="Moreira D."/>
            <person name="Kelley T."/>
            <person name="LaBaer J."/>
            <person name="Lin Y."/>
            <person name="Phelan M."/>
            <person name="Farmer A."/>
        </authorList>
    </citation>
    <scope>NUCLEOTIDE SEQUENCE [LARGE SCALE MRNA]</scope>
</reference>
<reference key="3">
    <citation type="journal article" date="2004" name="Nature">
        <title>The DNA sequence and comparative analysis of human chromosome 5.</title>
        <authorList>
            <person name="Schmutz J."/>
            <person name="Martin J."/>
            <person name="Terry A."/>
            <person name="Couronne O."/>
            <person name="Grimwood J."/>
            <person name="Lowry S."/>
            <person name="Gordon L.A."/>
            <person name="Scott D."/>
            <person name="Xie G."/>
            <person name="Huang W."/>
            <person name="Hellsten U."/>
            <person name="Tran-Gyamfi M."/>
            <person name="She X."/>
            <person name="Prabhakar S."/>
            <person name="Aerts A."/>
            <person name="Altherr M."/>
            <person name="Bajorek E."/>
            <person name="Black S."/>
            <person name="Branscomb E."/>
            <person name="Caoile C."/>
            <person name="Challacombe J.F."/>
            <person name="Chan Y.M."/>
            <person name="Denys M."/>
            <person name="Detter J.C."/>
            <person name="Escobar J."/>
            <person name="Flowers D."/>
            <person name="Fotopulos D."/>
            <person name="Glavina T."/>
            <person name="Gomez M."/>
            <person name="Gonzales E."/>
            <person name="Goodstein D."/>
            <person name="Grigoriev I."/>
            <person name="Groza M."/>
            <person name="Hammon N."/>
            <person name="Hawkins T."/>
            <person name="Haydu L."/>
            <person name="Israni S."/>
            <person name="Jett J."/>
            <person name="Kadner K."/>
            <person name="Kimball H."/>
            <person name="Kobayashi A."/>
            <person name="Lopez F."/>
            <person name="Lou Y."/>
            <person name="Martinez D."/>
            <person name="Medina C."/>
            <person name="Morgan J."/>
            <person name="Nandkeshwar R."/>
            <person name="Noonan J.P."/>
            <person name="Pitluck S."/>
            <person name="Pollard M."/>
            <person name="Predki P."/>
            <person name="Priest J."/>
            <person name="Ramirez L."/>
            <person name="Retterer J."/>
            <person name="Rodriguez A."/>
            <person name="Rogers S."/>
            <person name="Salamov A."/>
            <person name="Salazar A."/>
            <person name="Thayer N."/>
            <person name="Tice H."/>
            <person name="Tsai M."/>
            <person name="Ustaszewska A."/>
            <person name="Vo N."/>
            <person name="Wheeler J."/>
            <person name="Wu K."/>
            <person name="Yang J."/>
            <person name="Dickson M."/>
            <person name="Cheng J.-F."/>
            <person name="Eichler E.E."/>
            <person name="Olsen A."/>
            <person name="Pennacchio L.A."/>
            <person name="Rokhsar D.S."/>
            <person name="Richardson P."/>
            <person name="Lucas S.M."/>
            <person name="Myers R.M."/>
            <person name="Rubin E.M."/>
        </authorList>
    </citation>
    <scope>NUCLEOTIDE SEQUENCE [LARGE SCALE GENOMIC DNA]</scope>
</reference>
<reference key="4">
    <citation type="journal article" date="2004" name="Genome Res.">
        <title>The status, quality, and expansion of the NIH full-length cDNA project: the Mammalian Gene Collection (MGC).</title>
        <authorList>
            <consortium name="The MGC Project Team"/>
        </authorList>
    </citation>
    <scope>NUCLEOTIDE SEQUENCE [LARGE SCALE MRNA]</scope>
    <source>
        <tissue>Lung</tissue>
        <tissue>Testis</tissue>
    </source>
</reference>
<reference key="5">
    <citation type="journal article" date="2003" name="Nature">
        <title>Proteomic characterization of the human centrosome by protein correlation profiling.</title>
        <authorList>
            <person name="Andersen J.S."/>
            <person name="Wilkinson C.J."/>
            <person name="Mayor T."/>
            <person name="Mortensen P."/>
            <person name="Nigg E.A."/>
            <person name="Mann M."/>
        </authorList>
    </citation>
    <scope>IDENTIFICATION BY MASS SPECTROMETRY</scope>
    <scope>SUBCELLULAR LOCATION [LARGE SCALE ANALYSIS]</scope>
    <source>
        <tissue>Lymphoblast</tissue>
    </source>
</reference>
<reference key="6">
    <citation type="journal article" date="2012" name="Nucleic Acids Res.">
        <title>Functional and structural characterization of the mammalian TREX-2 complex that links transcription with nuclear messenger RNA export.</title>
        <authorList>
            <person name="Jani D."/>
            <person name="Lutz S."/>
            <person name="Hurt E."/>
            <person name="Laskey R.A."/>
            <person name="Stewart M."/>
            <person name="Wickramasinghe V.O."/>
        </authorList>
    </citation>
    <scope>INTERACTION WITH TREX-2 COMPLEX</scope>
    <scope>FUNCTION</scope>
</reference>
<reference key="7">
    <citation type="journal article" date="2013" name="J. Cell Sci.">
        <title>The human TREX-2 complex is stably associated with the nuclear pore basket.</title>
        <authorList>
            <person name="Umlauf D."/>
            <person name="Bonnet J."/>
            <person name="Waharte F."/>
            <person name="Fournier M."/>
            <person name="Stierle M."/>
            <person name="Fischer B."/>
            <person name="Brino L."/>
            <person name="Devys D."/>
            <person name="Tora L."/>
        </authorList>
    </citation>
    <scope>FUNCTION</scope>
    <scope>IDENTIFICATION IN THE TREX-2 COMPLEX</scope>
    <scope>SUBCELLULAR LOCATION</scope>
</reference>
<reference key="8">
    <citation type="journal article" date="2013" name="J. Proteome Res.">
        <title>Toward a comprehensive characterization of a human cancer cell phosphoproteome.</title>
        <authorList>
            <person name="Zhou H."/>
            <person name="Di Palma S."/>
            <person name="Preisinger C."/>
            <person name="Peng M."/>
            <person name="Polat A.N."/>
            <person name="Heck A.J."/>
            <person name="Mohammed S."/>
        </authorList>
    </citation>
    <scope>PHOSPHORYLATION [LARGE SCALE ANALYSIS] AT SER-135</scope>
    <scope>IDENTIFICATION BY MASS SPECTROMETRY [LARGE SCALE ANALYSIS]</scope>
    <source>
        <tissue>Erythroleukemia</tissue>
    </source>
</reference>
<reference key="9">
    <citation type="journal article" date="2015" name="Mol. Biol. Cell">
        <title>MDM1 is a microtubule-binding protein that negatively regulates centriole duplication.</title>
        <authorList>
            <person name="Van de Mark D."/>
            <person name="Kong D."/>
            <person name="Loncarek J."/>
            <person name="Stearns T."/>
        </authorList>
    </citation>
    <scope>SUBCELLULAR LOCATION</scope>
</reference>
<reference key="10">
    <citation type="journal article" date="2023" name="Cell Death Dis.">
        <title>USP49 deubiquitinase regulates the mitotic spindle checkpoint and prevents aneuploidy.</title>
        <authorList>
            <person name="Campos-Iglesias D."/>
            <person name="Fraile J.M."/>
            <person name="Bretones G."/>
            <person name="Montero A.A."/>
            <person name="Bonzon-Kulichenko E."/>
            <person name="Vazquez J."/>
            <person name="Lopez-Otin C."/>
            <person name="Freije J.M.P."/>
        </authorList>
    </citation>
    <scope>INTERACTION WITH USP49</scope>
</reference>
<dbReference type="EMBL" id="Y12473">
    <property type="protein sequence ID" value="CAA73077.1"/>
    <property type="molecule type" value="mRNA"/>
</dbReference>
<dbReference type="EMBL" id="BT006688">
    <property type="protein sequence ID" value="AAP35334.1"/>
    <property type="molecule type" value="mRNA"/>
</dbReference>
<dbReference type="EMBL" id="AC093510">
    <property type="status" value="NOT_ANNOTATED_CDS"/>
    <property type="molecule type" value="Genomic_DNA"/>
</dbReference>
<dbReference type="EMBL" id="BC005383">
    <property type="protein sequence ID" value="AAH05383.1"/>
    <property type="molecule type" value="mRNA"/>
</dbReference>
<dbReference type="EMBL" id="BC093793">
    <property type="protein sequence ID" value="AAH93793.1"/>
    <property type="molecule type" value="mRNA"/>
</dbReference>
<dbReference type="EMBL" id="BC112040">
    <property type="protein sequence ID" value="AAI12041.1"/>
    <property type="molecule type" value="mRNA"/>
</dbReference>
<dbReference type="CCDS" id="CCDS4066.1"/>
<dbReference type="RefSeq" id="NP_001284697.1">
    <property type="nucleotide sequence ID" value="NM_001297768.1"/>
</dbReference>
<dbReference type="RefSeq" id="NP_004356.2">
    <property type="nucleotide sequence ID" value="NM_004365.3"/>
</dbReference>
<dbReference type="SMR" id="O15182"/>
<dbReference type="BioGRID" id="107497">
    <property type="interactions" value="78"/>
</dbReference>
<dbReference type="ComplexPortal" id="CPX-7281">
    <property type="entry name" value="TREX-2 transcription-export complex, CETN3 variant"/>
</dbReference>
<dbReference type="CORUM" id="O15182"/>
<dbReference type="FunCoup" id="O15182">
    <property type="interactions" value="941"/>
</dbReference>
<dbReference type="IntAct" id="O15182">
    <property type="interactions" value="64"/>
</dbReference>
<dbReference type="MINT" id="O15182"/>
<dbReference type="STRING" id="9606.ENSP00000428259"/>
<dbReference type="iPTMnet" id="O15182"/>
<dbReference type="MetOSite" id="O15182"/>
<dbReference type="PhosphoSitePlus" id="O15182"/>
<dbReference type="BioMuta" id="CETN3"/>
<dbReference type="jPOST" id="O15182"/>
<dbReference type="MassIVE" id="O15182"/>
<dbReference type="PeptideAtlas" id="O15182"/>
<dbReference type="ProteomicsDB" id="48497"/>
<dbReference type="Pumba" id="O15182"/>
<dbReference type="Antibodypedia" id="24818">
    <property type="antibodies" value="196 antibodies from 24 providers"/>
</dbReference>
<dbReference type="DNASU" id="1070"/>
<dbReference type="Ensembl" id="ENST00000283122.8">
    <property type="protein sequence ID" value="ENSP00000283122.3"/>
    <property type="gene ID" value="ENSG00000153140.9"/>
</dbReference>
<dbReference type="GeneID" id="1070"/>
<dbReference type="KEGG" id="hsa:1070"/>
<dbReference type="MANE-Select" id="ENST00000283122.8">
    <property type="protein sequence ID" value="ENSP00000283122.3"/>
    <property type="RefSeq nucleotide sequence ID" value="NM_004365.4"/>
    <property type="RefSeq protein sequence ID" value="NP_004356.2"/>
</dbReference>
<dbReference type="UCSC" id="uc003kjo.4">
    <property type="organism name" value="human"/>
</dbReference>
<dbReference type="AGR" id="HGNC:1868"/>
<dbReference type="CTD" id="1070"/>
<dbReference type="DisGeNET" id="1070"/>
<dbReference type="GeneCards" id="CETN3"/>
<dbReference type="HGNC" id="HGNC:1868">
    <property type="gene designation" value="CETN3"/>
</dbReference>
<dbReference type="HPA" id="ENSG00000153140">
    <property type="expression patterns" value="Tissue enhanced (testis)"/>
</dbReference>
<dbReference type="MIM" id="602907">
    <property type="type" value="gene"/>
</dbReference>
<dbReference type="neXtProt" id="NX_O15182"/>
<dbReference type="OpenTargets" id="ENSG00000153140"/>
<dbReference type="PharmGKB" id="PA26421"/>
<dbReference type="VEuPathDB" id="HostDB:ENSG00000153140"/>
<dbReference type="GeneTree" id="ENSGT00940000157995"/>
<dbReference type="InParanoid" id="O15182"/>
<dbReference type="OMA" id="EFFMIMK"/>
<dbReference type="OrthoDB" id="343296at2759"/>
<dbReference type="PAN-GO" id="O15182">
    <property type="GO annotations" value="4 GO annotations based on evolutionary models"/>
</dbReference>
<dbReference type="PhylomeDB" id="O15182"/>
<dbReference type="TreeFam" id="TF101141"/>
<dbReference type="PathwayCommons" id="O15182"/>
<dbReference type="SignaLink" id="O15182"/>
<dbReference type="SIGNOR" id="O15182"/>
<dbReference type="BioGRID-ORCS" id="1070">
    <property type="hits" value="27 hits in 1122 CRISPR screens"/>
</dbReference>
<dbReference type="CD-CODE" id="8C2F96ED">
    <property type="entry name" value="Centrosome"/>
</dbReference>
<dbReference type="ChiTaRS" id="CETN3">
    <property type="organism name" value="human"/>
</dbReference>
<dbReference type="GeneWiki" id="CETN3"/>
<dbReference type="GenomeRNAi" id="1070"/>
<dbReference type="Pharos" id="O15182">
    <property type="development level" value="Tbio"/>
</dbReference>
<dbReference type="PRO" id="PR:O15182"/>
<dbReference type="Proteomes" id="UP000005640">
    <property type="component" value="Chromosome 5"/>
</dbReference>
<dbReference type="RNAct" id="O15182">
    <property type="molecule type" value="protein"/>
</dbReference>
<dbReference type="Bgee" id="ENSG00000153140">
    <property type="expression patterns" value="Expressed in oocyte and 213 other cell types or tissues"/>
</dbReference>
<dbReference type="ExpressionAtlas" id="O15182">
    <property type="expression patterns" value="baseline and differential"/>
</dbReference>
<dbReference type="GO" id="GO:0005814">
    <property type="term" value="C:centriole"/>
    <property type="evidence" value="ECO:0000314"/>
    <property type="project" value="UniProtKB"/>
</dbReference>
<dbReference type="GO" id="GO:0005813">
    <property type="term" value="C:centrosome"/>
    <property type="evidence" value="ECO:0000314"/>
    <property type="project" value="UniProtKB"/>
</dbReference>
<dbReference type="GO" id="GO:0036064">
    <property type="term" value="C:ciliary basal body"/>
    <property type="evidence" value="ECO:0000314"/>
    <property type="project" value="HPA"/>
</dbReference>
<dbReference type="GO" id="GO:0005737">
    <property type="term" value="C:cytoplasm"/>
    <property type="evidence" value="ECO:0007669"/>
    <property type="project" value="UniProtKB-KW"/>
</dbReference>
<dbReference type="GO" id="GO:0005815">
    <property type="term" value="C:microtubule organizing center"/>
    <property type="evidence" value="ECO:0000318"/>
    <property type="project" value="GO_Central"/>
</dbReference>
<dbReference type="GO" id="GO:0044615">
    <property type="term" value="C:nuclear pore nuclear basket"/>
    <property type="evidence" value="ECO:0000314"/>
    <property type="project" value="UniProtKB"/>
</dbReference>
<dbReference type="GO" id="GO:0005730">
    <property type="term" value="C:nucleolus"/>
    <property type="evidence" value="ECO:0007669"/>
    <property type="project" value="UniProtKB-SubCell"/>
</dbReference>
<dbReference type="GO" id="GO:0032391">
    <property type="term" value="C:photoreceptor connecting cilium"/>
    <property type="evidence" value="ECO:0007669"/>
    <property type="project" value="Ensembl"/>
</dbReference>
<dbReference type="GO" id="GO:0070390">
    <property type="term" value="C:transcription export complex 2"/>
    <property type="evidence" value="ECO:0000314"/>
    <property type="project" value="UniProtKB"/>
</dbReference>
<dbReference type="GO" id="GO:0005509">
    <property type="term" value="F:calcium ion binding"/>
    <property type="evidence" value="ECO:0000318"/>
    <property type="project" value="GO_Central"/>
</dbReference>
<dbReference type="GO" id="GO:0031683">
    <property type="term" value="F:G-protein beta/gamma-subunit complex binding"/>
    <property type="evidence" value="ECO:0007669"/>
    <property type="project" value="Ensembl"/>
</dbReference>
<dbReference type="GO" id="GO:0008017">
    <property type="term" value="F:microtubule binding"/>
    <property type="evidence" value="ECO:0000318"/>
    <property type="project" value="GO_Central"/>
</dbReference>
<dbReference type="GO" id="GO:0051301">
    <property type="term" value="P:cell division"/>
    <property type="evidence" value="ECO:0007669"/>
    <property type="project" value="UniProtKB-KW"/>
</dbReference>
<dbReference type="GO" id="GO:0007098">
    <property type="term" value="P:centrosome cycle"/>
    <property type="evidence" value="ECO:0000304"/>
    <property type="project" value="ProtInc"/>
</dbReference>
<dbReference type="GO" id="GO:0000226">
    <property type="term" value="P:microtubule cytoskeleton organization"/>
    <property type="evidence" value="ECO:0000318"/>
    <property type="project" value="GO_Central"/>
</dbReference>
<dbReference type="GO" id="GO:0051028">
    <property type="term" value="P:mRNA transport"/>
    <property type="evidence" value="ECO:0007669"/>
    <property type="project" value="UniProtKB-KW"/>
</dbReference>
<dbReference type="GO" id="GO:0015031">
    <property type="term" value="P:protein transport"/>
    <property type="evidence" value="ECO:0007669"/>
    <property type="project" value="UniProtKB-KW"/>
</dbReference>
<dbReference type="CDD" id="cd00051">
    <property type="entry name" value="EFh"/>
    <property type="match status" value="1"/>
</dbReference>
<dbReference type="FunFam" id="1.10.238.10:FF:000122">
    <property type="entry name" value="Centrin 3"/>
    <property type="match status" value="1"/>
</dbReference>
<dbReference type="FunFam" id="1.10.238.10:FF:000189">
    <property type="entry name" value="Centrin 3"/>
    <property type="match status" value="1"/>
</dbReference>
<dbReference type="Gene3D" id="1.10.238.10">
    <property type="entry name" value="EF-hand"/>
    <property type="match status" value="2"/>
</dbReference>
<dbReference type="InterPro" id="IPR050230">
    <property type="entry name" value="CALM/Myosin/TropC-like"/>
</dbReference>
<dbReference type="InterPro" id="IPR011992">
    <property type="entry name" value="EF-hand-dom_pair"/>
</dbReference>
<dbReference type="InterPro" id="IPR018247">
    <property type="entry name" value="EF_Hand_1_Ca_BS"/>
</dbReference>
<dbReference type="InterPro" id="IPR002048">
    <property type="entry name" value="EF_hand_dom"/>
</dbReference>
<dbReference type="PANTHER" id="PTHR23048:SF48">
    <property type="entry name" value="CENTRIN 3"/>
    <property type="match status" value="1"/>
</dbReference>
<dbReference type="PANTHER" id="PTHR23048">
    <property type="entry name" value="MYOSIN LIGHT CHAIN 1, 3"/>
    <property type="match status" value="1"/>
</dbReference>
<dbReference type="Pfam" id="PF13499">
    <property type="entry name" value="EF-hand_7"/>
    <property type="match status" value="2"/>
</dbReference>
<dbReference type="SMART" id="SM00054">
    <property type="entry name" value="EFh"/>
    <property type="match status" value="4"/>
</dbReference>
<dbReference type="SUPFAM" id="SSF47473">
    <property type="entry name" value="EF-hand"/>
    <property type="match status" value="1"/>
</dbReference>
<dbReference type="PROSITE" id="PS00018">
    <property type="entry name" value="EF_HAND_1"/>
    <property type="match status" value="1"/>
</dbReference>
<dbReference type="PROSITE" id="PS50222">
    <property type="entry name" value="EF_HAND_2"/>
    <property type="match status" value="4"/>
</dbReference>
<evidence type="ECO:0000250" key="1"/>
<evidence type="ECO:0000255" key="2">
    <source>
        <dbReference type="PROSITE-ProRule" id="PRU00448"/>
    </source>
</evidence>
<evidence type="ECO:0000269" key="3">
    <source>
    </source>
</evidence>
<evidence type="ECO:0000269" key="4">
    <source>
    </source>
</evidence>
<evidence type="ECO:0000269" key="5">
    <source>
    </source>
</evidence>
<evidence type="ECO:0000269" key="6">
    <source>
    </source>
</evidence>
<evidence type="ECO:0000269" key="7">
    <source>
    </source>
</evidence>
<evidence type="ECO:0000269" key="8">
    <source>
    </source>
</evidence>
<evidence type="ECO:0000303" key="9">
    <source>
    </source>
</evidence>
<evidence type="ECO:0000305" key="10"/>
<evidence type="ECO:0000305" key="11">
    <source>
    </source>
</evidence>
<evidence type="ECO:0007744" key="12">
    <source>
    </source>
</evidence>
<name>CETN3_HUMAN</name>
<proteinExistence type="evidence at protein level"/>
<keyword id="KW-0106">Calcium</keyword>
<keyword id="KW-0131">Cell cycle</keyword>
<keyword id="KW-0132">Cell division</keyword>
<keyword id="KW-0963">Cytoplasm</keyword>
<keyword id="KW-0206">Cytoskeleton</keyword>
<keyword id="KW-0479">Metal-binding</keyword>
<keyword id="KW-0498">Mitosis</keyword>
<keyword id="KW-0509">mRNA transport</keyword>
<keyword id="KW-0906">Nuclear pore complex</keyword>
<keyword id="KW-0539">Nucleus</keyword>
<keyword id="KW-0597">Phosphoprotein</keyword>
<keyword id="KW-0653">Protein transport</keyword>
<keyword id="KW-1267">Proteomics identification</keyword>
<keyword id="KW-1185">Reference proteome</keyword>
<keyword id="KW-0677">Repeat</keyword>
<keyword id="KW-0811">Translocation</keyword>
<keyword id="KW-0813">Transport</keyword>
<gene>
    <name type="primary">CETN3</name>
    <name type="synonym">CEN3</name>
</gene>